<reference key="1">
    <citation type="journal article" date="1994" name="Plant J.">
        <title>Characterization of two cDNAs that encode MAP kinase homologues in Arabidopsis thaliana and analysis of the possible role of auxin in activating such kinase activities in cultured cells.</title>
        <authorList>
            <person name="Mizoguchi T."/>
            <person name="Gotoh Y."/>
            <person name="Nishida E."/>
            <person name="Yamaguchi-Shinozaki K."/>
            <person name="Hayashida N."/>
            <person name="Iwasaki T."/>
            <person name="Kamada H."/>
            <person name="Shinozaki K."/>
        </authorList>
    </citation>
    <scope>NUCLEOTIDE SEQUENCE [MRNA]</scope>
    <scope>ACTIVITY REGULATION</scope>
    <scope>TISSUE SPECIFICITY</scope>
    <scope>PHOSPHORYLATION</scope>
    <source>
        <strain>cv. Columbia</strain>
    </source>
</reference>
<reference key="2">
    <citation type="journal article" date="2000" name="Nature">
        <title>Sequence and analysis of chromosome 1 of the plant Arabidopsis thaliana.</title>
        <authorList>
            <person name="Theologis A."/>
            <person name="Ecker J.R."/>
            <person name="Palm C.J."/>
            <person name="Federspiel N.A."/>
            <person name="Kaul S."/>
            <person name="White O."/>
            <person name="Alonso J."/>
            <person name="Altafi H."/>
            <person name="Araujo R."/>
            <person name="Bowman C.L."/>
            <person name="Brooks S.Y."/>
            <person name="Buehler E."/>
            <person name="Chan A."/>
            <person name="Chao Q."/>
            <person name="Chen H."/>
            <person name="Cheuk R.F."/>
            <person name="Chin C.W."/>
            <person name="Chung M.K."/>
            <person name="Conn L."/>
            <person name="Conway A.B."/>
            <person name="Conway A.R."/>
            <person name="Creasy T.H."/>
            <person name="Dewar K."/>
            <person name="Dunn P."/>
            <person name="Etgu P."/>
            <person name="Feldblyum T.V."/>
            <person name="Feng J.-D."/>
            <person name="Fong B."/>
            <person name="Fujii C.Y."/>
            <person name="Gill J.E."/>
            <person name="Goldsmith A.D."/>
            <person name="Haas B."/>
            <person name="Hansen N.F."/>
            <person name="Hughes B."/>
            <person name="Huizar L."/>
            <person name="Hunter J.L."/>
            <person name="Jenkins J."/>
            <person name="Johnson-Hopson C."/>
            <person name="Khan S."/>
            <person name="Khaykin E."/>
            <person name="Kim C.J."/>
            <person name="Koo H.L."/>
            <person name="Kremenetskaia I."/>
            <person name="Kurtz D.B."/>
            <person name="Kwan A."/>
            <person name="Lam B."/>
            <person name="Langin-Hooper S."/>
            <person name="Lee A."/>
            <person name="Lee J.M."/>
            <person name="Lenz C.A."/>
            <person name="Li J.H."/>
            <person name="Li Y.-P."/>
            <person name="Lin X."/>
            <person name="Liu S.X."/>
            <person name="Liu Z.A."/>
            <person name="Luros J.S."/>
            <person name="Maiti R."/>
            <person name="Marziali A."/>
            <person name="Militscher J."/>
            <person name="Miranda M."/>
            <person name="Nguyen M."/>
            <person name="Nierman W.C."/>
            <person name="Osborne B.I."/>
            <person name="Pai G."/>
            <person name="Peterson J."/>
            <person name="Pham P.K."/>
            <person name="Rizzo M."/>
            <person name="Rooney T."/>
            <person name="Rowley D."/>
            <person name="Sakano H."/>
            <person name="Salzberg S.L."/>
            <person name="Schwartz J.R."/>
            <person name="Shinn P."/>
            <person name="Southwick A.M."/>
            <person name="Sun H."/>
            <person name="Tallon L.J."/>
            <person name="Tambunga G."/>
            <person name="Toriumi M.J."/>
            <person name="Town C.D."/>
            <person name="Utterback T."/>
            <person name="Van Aken S."/>
            <person name="Vaysberg M."/>
            <person name="Vysotskaia V.S."/>
            <person name="Walker M."/>
            <person name="Wu D."/>
            <person name="Yu G."/>
            <person name="Fraser C.M."/>
            <person name="Venter J.C."/>
            <person name="Davis R.W."/>
        </authorList>
    </citation>
    <scope>NUCLEOTIDE SEQUENCE [LARGE SCALE GENOMIC DNA]</scope>
    <source>
        <strain>cv. Columbia</strain>
    </source>
</reference>
<reference key="3">
    <citation type="journal article" date="2017" name="Plant J.">
        <title>Araport11: a complete reannotation of the Arabidopsis thaliana reference genome.</title>
        <authorList>
            <person name="Cheng C.Y."/>
            <person name="Krishnakumar V."/>
            <person name="Chan A.P."/>
            <person name="Thibaud-Nissen F."/>
            <person name="Schobel S."/>
            <person name="Town C.D."/>
        </authorList>
    </citation>
    <scope>GENOME REANNOTATION</scope>
    <source>
        <strain>cv. Columbia</strain>
    </source>
</reference>
<reference key="4">
    <citation type="journal article" date="2003" name="Science">
        <title>Empirical analysis of transcriptional activity in the Arabidopsis genome.</title>
        <authorList>
            <person name="Yamada K."/>
            <person name="Lim J."/>
            <person name="Dale J.M."/>
            <person name="Chen H."/>
            <person name="Shinn P."/>
            <person name="Palm C.J."/>
            <person name="Southwick A.M."/>
            <person name="Wu H.C."/>
            <person name="Kim C.J."/>
            <person name="Nguyen M."/>
            <person name="Pham P.K."/>
            <person name="Cheuk R.F."/>
            <person name="Karlin-Newmann G."/>
            <person name="Liu S.X."/>
            <person name="Lam B."/>
            <person name="Sakano H."/>
            <person name="Wu T."/>
            <person name="Yu G."/>
            <person name="Miranda M."/>
            <person name="Quach H.L."/>
            <person name="Tripp M."/>
            <person name="Chang C.H."/>
            <person name="Lee J.M."/>
            <person name="Toriumi M.J."/>
            <person name="Chan M.M."/>
            <person name="Tang C.C."/>
            <person name="Onodera C.S."/>
            <person name="Deng J.M."/>
            <person name="Akiyama K."/>
            <person name="Ansari Y."/>
            <person name="Arakawa T."/>
            <person name="Banh J."/>
            <person name="Banno F."/>
            <person name="Bowser L."/>
            <person name="Brooks S.Y."/>
            <person name="Carninci P."/>
            <person name="Chao Q."/>
            <person name="Choy N."/>
            <person name="Enju A."/>
            <person name="Goldsmith A.D."/>
            <person name="Gurjal M."/>
            <person name="Hansen N.F."/>
            <person name="Hayashizaki Y."/>
            <person name="Johnson-Hopson C."/>
            <person name="Hsuan V.W."/>
            <person name="Iida K."/>
            <person name="Karnes M."/>
            <person name="Khan S."/>
            <person name="Koesema E."/>
            <person name="Ishida J."/>
            <person name="Jiang P.X."/>
            <person name="Jones T."/>
            <person name="Kawai J."/>
            <person name="Kamiya A."/>
            <person name="Meyers C."/>
            <person name="Nakajima M."/>
            <person name="Narusaka M."/>
            <person name="Seki M."/>
            <person name="Sakurai T."/>
            <person name="Satou M."/>
            <person name="Tamse R."/>
            <person name="Vaysberg M."/>
            <person name="Wallender E.K."/>
            <person name="Wong C."/>
            <person name="Yamamura Y."/>
            <person name="Yuan S."/>
            <person name="Shinozaki K."/>
            <person name="Davis R.W."/>
            <person name="Theologis A."/>
            <person name="Ecker J.R."/>
        </authorList>
    </citation>
    <scope>NUCLEOTIDE SEQUENCE [LARGE SCALE MRNA]</scope>
    <source>
        <strain>cv. Columbia</strain>
    </source>
</reference>
<reference key="5">
    <citation type="journal article" date="2002" name="Trends Plant Sci.">
        <title>Mitogen-activated protein kinase cascades in plants: a new nomenclature.</title>
        <authorList>
            <consortium name="MAPK group"/>
        </authorList>
    </citation>
    <scope>GENE FAMILY</scope>
    <scope>NOMENCLATURE</scope>
</reference>
<reference key="6">
    <citation type="journal article" date="2006" name="Trends Plant Sci.">
        <title>Ancient signals: comparative genomics of plant MAPK and MAPKK gene families.</title>
        <authorList>
            <person name="Hamel L.P."/>
            <person name="Nicole M.C."/>
            <person name="Sritubtim S."/>
            <person name="Morency M.J."/>
            <person name="Ellis M."/>
            <person name="Ehlting J."/>
            <person name="Beaudoin N."/>
            <person name="Barbazuk B."/>
            <person name="Klessig D."/>
            <person name="Lee J."/>
            <person name="Martin G."/>
            <person name="Mundy J."/>
            <person name="Ohashi Y."/>
            <person name="Scheel D."/>
            <person name="Sheen J."/>
            <person name="Xing T."/>
            <person name="Zhang S."/>
            <person name="Seguin A."/>
            <person name="Ellis B.E."/>
        </authorList>
    </citation>
    <scope>GENE FAMILY</scope>
</reference>
<reference key="7">
    <citation type="journal article" date="2007" name="Plant Cell">
        <title>The Arabidopsis mitogen-activated protein kinase kinase MKK3 is upstream of group C mitogen-activated protein kinases and participates in pathogen signaling.</title>
        <authorList>
            <person name="Doczi R."/>
            <person name="Brader G."/>
            <person name="Pettko-Szandtner A."/>
            <person name="Rajh I."/>
            <person name="Djamei A."/>
            <person name="Pitzschke A."/>
            <person name="Teige M."/>
            <person name="Hirt H."/>
        </authorList>
    </citation>
    <scope>INTERACTION WITH MKK3</scope>
</reference>
<reference key="8">
    <citation type="journal article" date="2015" name="Plant Mol. Biol.">
        <title>An abscisic acid inducible Arabidopsis MAPKKK, MAPKKK18 regulates leaf senescence via its kinase activity.</title>
        <authorList>
            <person name="Matsuoka D."/>
            <person name="Yasufuku T."/>
            <person name="Furuya T."/>
            <person name="Nanmori T."/>
        </authorList>
    </citation>
    <scope>INTERACTION WITH MKK3</scope>
    <source>
        <strain>cv. Columbia</strain>
    </source>
</reference>
<sequence>MATPVDPPNGIRNQGKHYFSMWQTLFEIDTKYVPIKPIGRGAYGVVCSSVNRESNERVAIKKIHNVFENRIDALRTLRELKLLRHLRHENVVALKDVMMANHKRSFKDVYLVYELMDTDLHQIIKSSQVLSNDHCQYFLFQLLRGLKYIHSANILHRDLKPGNLLVNANCDLKICDFGLARTSNTKGQFMTEYVVTRWYRAPELLLCCDNYGTSIDVWSVGCIFAELLGRKPVFPGTECLNQIKLIINILGSQREEDLEFIDNPKAKRYIESLPYSPGISFSRLYPGANVLAIDLLQKMLVLDPSKRISVTEALQHPYMAPLYDPSANPPAQVPIDLDVDEDEDLGAEMIRELMWKEMIHYHPEAATINNNEVSEF</sequence>
<name>MPK2_ARATH</name>
<keyword id="KW-0067">ATP-binding</keyword>
<keyword id="KW-0418">Kinase</keyword>
<keyword id="KW-0547">Nucleotide-binding</keyword>
<keyword id="KW-0597">Phosphoprotein</keyword>
<keyword id="KW-1185">Reference proteome</keyword>
<keyword id="KW-0723">Serine/threonine-protein kinase</keyword>
<keyword id="KW-0808">Transferase</keyword>
<accession>Q39022</accession>
<accession>Q9LQ58</accession>
<dbReference type="EC" id="2.7.11.24"/>
<dbReference type="EMBL" id="D14714">
    <property type="protein sequence ID" value="BAA03536.1"/>
    <property type="molecule type" value="mRNA"/>
</dbReference>
<dbReference type="EMBL" id="AC009317">
    <property type="protein sequence ID" value="AAF79750.1"/>
    <property type="molecule type" value="Genomic_DNA"/>
</dbReference>
<dbReference type="EMBL" id="CP002684">
    <property type="protein sequence ID" value="AEE33590.1"/>
    <property type="molecule type" value="Genomic_DNA"/>
</dbReference>
<dbReference type="EMBL" id="CP002684">
    <property type="protein sequence ID" value="AEE33591.1"/>
    <property type="molecule type" value="Genomic_DNA"/>
</dbReference>
<dbReference type="EMBL" id="AY035134">
    <property type="protein sequence ID" value="AAK59639.1"/>
    <property type="molecule type" value="mRNA"/>
</dbReference>
<dbReference type="EMBL" id="AY113911">
    <property type="protein sequence ID" value="AAM44959.1"/>
    <property type="molecule type" value="mRNA"/>
</dbReference>
<dbReference type="PIR" id="F96619">
    <property type="entry name" value="F96619"/>
</dbReference>
<dbReference type="RefSeq" id="NP_564746.1">
    <property type="nucleotide sequence ID" value="NM_104651.5"/>
</dbReference>
<dbReference type="RefSeq" id="NP_974049.1">
    <property type="nucleotide sequence ID" value="NM_202320.1"/>
</dbReference>
<dbReference type="SMR" id="Q39022"/>
<dbReference type="BioGRID" id="27473">
    <property type="interactions" value="138"/>
</dbReference>
<dbReference type="FunCoup" id="Q39022">
    <property type="interactions" value="2965"/>
</dbReference>
<dbReference type="IntAct" id="Q39022">
    <property type="interactions" value="4"/>
</dbReference>
<dbReference type="STRING" id="3702.Q39022"/>
<dbReference type="iPTMnet" id="Q39022"/>
<dbReference type="PaxDb" id="3702-AT1G59580.1"/>
<dbReference type="ProteomicsDB" id="238271"/>
<dbReference type="EnsemblPlants" id="AT1G59580.1">
    <property type="protein sequence ID" value="AT1G59580.1"/>
    <property type="gene ID" value="AT1G59580"/>
</dbReference>
<dbReference type="EnsemblPlants" id="AT1G59580.2">
    <property type="protein sequence ID" value="AT1G59580.2"/>
    <property type="gene ID" value="AT1G59580"/>
</dbReference>
<dbReference type="GeneID" id="842248"/>
<dbReference type="Gramene" id="AT1G59580.1">
    <property type="protein sequence ID" value="AT1G59580.1"/>
    <property type="gene ID" value="AT1G59580"/>
</dbReference>
<dbReference type="Gramene" id="AT1G59580.2">
    <property type="protein sequence ID" value="AT1G59580.2"/>
    <property type="gene ID" value="AT1G59580"/>
</dbReference>
<dbReference type="KEGG" id="ath:AT1G59580"/>
<dbReference type="Araport" id="AT1G59580"/>
<dbReference type="TAIR" id="AT1G59580">
    <property type="gene designation" value="MPK2"/>
</dbReference>
<dbReference type="eggNOG" id="KOG0660">
    <property type="taxonomic scope" value="Eukaryota"/>
</dbReference>
<dbReference type="HOGENOM" id="CLU_000288_181_1_1"/>
<dbReference type="InParanoid" id="Q39022"/>
<dbReference type="OMA" id="NRYTDLN"/>
<dbReference type="OrthoDB" id="192887at2759"/>
<dbReference type="PhylomeDB" id="Q39022"/>
<dbReference type="BRENDA" id="2.7.11.24">
    <property type="organism ID" value="399"/>
</dbReference>
<dbReference type="PRO" id="PR:Q39022"/>
<dbReference type="Proteomes" id="UP000006548">
    <property type="component" value="Chromosome 1"/>
</dbReference>
<dbReference type="ExpressionAtlas" id="Q39022">
    <property type="expression patterns" value="baseline and differential"/>
</dbReference>
<dbReference type="GO" id="GO:0005524">
    <property type="term" value="F:ATP binding"/>
    <property type="evidence" value="ECO:0007669"/>
    <property type="project" value="UniProtKB-KW"/>
</dbReference>
<dbReference type="GO" id="GO:0004707">
    <property type="term" value="F:MAP kinase activity"/>
    <property type="evidence" value="ECO:0007669"/>
    <property type="project" value="UniProtKB-EC"/>
</dbReference>
<dbReference type="GO" id="GO:0004672">
    <property type="term" value="F:protein kinase activity"/>
    <property type="evidence" value="ECO:0000314"/>
    <property type="project" value="TAIR"/>
</dbReference>
<dbReference type="GO" id="GO:0106310">
    <property type="term" value="F:protein serine kinase activity"/>
    <property type="evidence" value="ECO:0007669"/>
    <property type="project" value="RHEA"/>
</dbReference>
<dbReference type="GO" id="GO:0006468">
    <property type="term" value="P:protein phosphorylation"/>
    <property type="evidence" value="ECO:0000314"/>
    <property type="project" value="TAIR"/>
</dbReference>
<dbReference type="GO" id="GO:0009611">
    <property type="term" value="P:response to wounding"/>
    <property type="evidence" value="ECO:0000314"/>
    <property type="project" value="TAIR"/>
</dbReference>
<dbReference type="CDD" id="cd07858">
    <property type="entry name" value="STKc_TEY_MAPK"/>
    <property type="match status" value="1"/>
</dbReference>
<dbReference type="FunFam" id="1.10.510.10:FF:000206">
    <property type="entry name" value="Mitogen-activated protein kinase"/>
    <property type="match status" value="1"/>
</dbReference>
<dbReference type="FunFam" id="3.30.200.20:FF:000046">
    <property type="entry name" value="Mitogen-activated protein kinase"/>
    <property type="match status" value="1"/>
</dbReference>
<dbReference type="Gene3D" id="3.30.200.20">
    <property type="entry name" value="Phosphorylase Kinase, domain 1"/>
    <property type="match status" value="1"/>
</dbReference>
<dbReference type="Gene3D" id="1.10.510.10">
    <property type="entry name" value="Transferase(Phosphotransferase) domain 1"/>
    <property type="match status" value="1"/>
</dbReference>
<dbReference type="InterPro" id="IPR011009">
    <property type="entry name" value="Kinase-like_dom_sf"/>
</dbReference>
<dbReference type="InterPro" id="IPR050117">
    <property type="entry name" value="MAP_kinase"/>
</dbReference>
<dbReference type="InterPro" id="IPR003527">
    <property type="entry name" value="MAP_kinase_CS"/>
</dbReference>
<dbReference type="InterPro" id="IPR000719">
    <property type="entry name" value="Prot_kinase_dom"/>
</dbReference>
<dbReference type="InterPro" id="IPR017441">
    <property type="entry name" value="Protein_kinase_ATP_BS"/>
</dbReference>
<dbReference type="InterPro" id="IPR008271">
    <property type="entry name" value="Ser/Thr_kinase_AS"/>
</dbReference>
<dbReference type="PANTHER" id="PTHR24055">
    <property type="entry name" value="MITOGEN-ACTIVATED PROTEIN KINASE"/>
    <property type="match status" value="1"/>
</dbReference>
<dbReference type="Pfam" id="PF00069">
    <property type="entry name" value="Pkinase"/>
    <property type="match status" value="1"/>
</dbReference>
<dbReference type="SMART" id="SM00220">
    <property type="entry name" value="S_TKc"/>
    <property type="match status" value="1"/>
</dbReference>
<dbReference type="SUPFAM" id="SSF56112">
    <property type="entry name" value="Protein kinase-like (PK-like)"/>
    <property type="match status" value="1"/>
</dbReference>
<dbReference type="PROSITE" id="PS01351">
    <property type="entry name" value="MAPK"/>
    <property type="match status" value="1"/>
</dbReference>
<dbReference type="PROSITE" id="PS00107">
    <property type="entry name" value="PROTEIN_KINASE_ATP"/>
    <property type="match status" value="1"/>
</dbReference>
<dbReference type="PROSITE" id="PS50011">
    <property type="entry name" value="PROTEIN_KINASE_DOM"/>
    <property type="match status" value="1"/>
</dbReference>
<dbReference type="PROSITE" id="PS00108">
    <property type="entry name" value="PROTEIN_KINASE_ST"/>
    <property type="match status" value="1"/>
</dbReference>
<protein>
    <recommendedName>
        <fullName>Mitogen-activated protein kinase 2</fullName>
        <shortName>AtMPK2</shortName>
        <shortName>MAP kinase 2</shortName>
        <ecNumber>2.7.11.24</ecNumber>
    </recommendedName>
</protein>
<comment type="catalytic activity">
    <reaction>
        <text>L-seryl-[protein] + ATP = O-phospho-L-seryl-[protein] + ADP + H(+)</text>
        <dbReference type="Rhea" id="RHEA:17989"/>
        <dbReference type="Rhea" id="RHEA-COMP:9863"/>
        <dbReference type="Rhea" id="RHEA-COMP:11604"/>
        <dbReference type="ChEBI" id="CHEBI:15378"/>
        <dbReference type="ChEBI" id="CHEBI:29999"/>
        <dbReference type="ChEBI" id="CHEBI:30616"/>
        <dbReference type="ChEBI" id="CHEBI:83421"/>
        <dbReference type="ChEBI" id="CHEBI:456216"/>
        <dbReference type="EC" id="2.7.11.24"/>
    </reaction>
</comment>
<comment type="catalytic activity">
    <reaction>
        <text>L-threonyl-[protein] + ATP = O-phospho-L-threonyl-[protein] + ADP + H(+)</text>
        <dbReference type="Rhea" id="RHEA:46608"/>
        <dbReference type="Rhea" id="RHEA-COMP:11060"/>
        <dbReference type="Rhea" id="RHEA-COMP:11605"/>
        <dbReference type="ChEBI" id="CHEBI:15378"/>
        <dbReference type="ChEBI" id="CHEBI:30013"/>
        <dbReference type="ChEBI" id="CHEBI:30616"/>
        <dbReference type="ChEBI" id="CHEBI:61977"/>
        <dbReference type="ChEBI" id="CHEBI:456216"/>
        <dbReference type="EC" id="2.7.11.24"/>
    </reaction>
</comment>
<comment type="activity regulation">
    <text evidence="9">Activated by threonine and tyrosine phosphorylation.</text>
</comment>
<comment type="subunit">
    <text evidence="5 6">Interacts with MKK3.</text>
</comment>
<comment type="interaction">
    <interactant intactId="EBI-2358362">
        <id>Q39022</id>
    </interactant>
    <interactant intactId="EBI-9838721">
        <id>O64647</id>
        <label>TCP9</label>
    </interactant>
    <organismsDiffer>false</organismsDiffer>
    <experiments>3</experiments>
</comment>
<comment type="tissue specificity">
    <text evidence="7">Highest levels in the stem. Present in the leaf, root and flower, but not in seeds.</text>
</comment>
<comment type="domain">
    <text>The TXY motif contains the threonine and tyrosine residues whose phosphorylation activates the MAP kinases.</text>
</comment>
<comment type="PTM">
    <text evidence="1 7">Dually phosphorylated on Thr-191 and Tyr-193, which activates the enzyme (By similarity). Phosphorylated on Ser residue.</text>
</comment>
<comment type="similarity">
    <text evidence="8">Belongs to the protein kinase superfamily. CMGC Ser/Thr protein kinase family. MAP kinase subfamily.</text>
</comment>
<gene>
    <name type="primary">MPK2</name>
    <name type="ordered locus">At1g59580</name>
    <name type="ORF">T30E16.13</name>
</gene>
<proteinExistence type="evidence at protein level"/>
<evidence type="ECO:0000250" key="1"/>
<evidence type="ECO:0000250" key="2">
    <source>
        <dbReference type="UniProtKB" id="Q39026"/>
    </source>
</evidence>
<evidence type="ECO:0000255" key="3">
    <source>
        <dbReference type="PROSITE-ProRule" id="PRU00159"/>
    </source>
</evidence>
<evidence type="ECO:0000255" key="4">
    <source>
        <dbReference type="PROSITE-ProRule" id="PRU10027"/>
    </source>
</evidence>
<evidence type="ECO:0000269" key="5">
    <source>
    </source>
</evidence>
<evidence type="ECO:0000269" key="6">
    <source>
    </source>
</evidence>
<evidence type="ECO:0000269" key="7">
    <source>
    </source>
</evidence>
<evidence type="ECO:0000305" key="8"/>
<evidence type="ECO:0000305" key="9">
    <source>
    </source>
</evidence>
<organism>
    <name type="scientific">Arabidopsis thaliana</name>
    <name type="common">Mouse-ear cress</name>
    <dbReference type="NCBI Taxonomy" id="3702"/>
    <lineage>
        <taxon>Eukaryota</taxon>
        <taxon>Viridiplantae</taxon>
        <taxon>Streptophyta</taxon>
        <taxon>Embryophyta</taxon>
        <taxon>Tracheophyta</taxon>
        <taxon>Spermatophyta</taxon>
        <taxon>Magnoliopsida</taxon>
        <taxon>eudicotyledons</taxon>
        <taxon>Gunneridae</taxon>
        <taxon>Pentapetalae</taxon>
        <taxon>rosids</taxon>
        <taxon>malvids</taxon>
        <taxon>Brassicales</taxon>
        <taxon>Brassicaceae</taxon>
        <taxon>Camelineae</taxon>
        <taxon>Arabidopsis</taxon>
    </lineage>
</organism>
<feature type="chain" id="PRO_0000186311" description="Mitogen-activated protein kinase 2">
    <location>
        <begin position="1"/>
        <end position="376"/>
    </location>
</feature>
<feature type="domain" description="Protein kinase" evidence="3">
    <location>
        <begin position="32"/>
        <end position="319"/>
    </location>
</feature>
<feature type="short sequence motif" description="TXY">
    <location>
        <begin position="191"/>
        <end position="193"/>
    </location>
</feature>
<feature type="active site" description="Proton acceptor" evidence="3 4">
    <location>
        <position position="158"/>
    </location>
</feature>
<feature type="binding site" evidence="3">
    <location>
        <begin position="38"/>
        <end position="46"/>
    </location>
    <ligand>
        <name>ATP</name>
        <dbReference type="ChEBI" id="CHEBI:30616"/>
    </ligand>
</feature>
<feature type="binding site" evidence="3">
    <location>
        <position position="61"/>
    </location>
    <ligand>
        <name>ATP</name>
        <dbReference type="ChEBI" id="CHEBI:30616"/>
    </ligand>
</feature>
<feature type="modified residue" description="Phosphothreonine" evidence="2">
    <location>
        <position position="191"/>
    </location>
</feature>
<feature type="modified residue" description="Phosphotyrosine" evidence="2">
    <location>
        <position position="193"/>
    </location>
</feature>
<feature type="modified residue" description="Phosphothreonine" evidence="2">
    <location>
        <position position="196"/>
    </location>
</feature>
<feature type="sequence conflict" description="In Ref. 1; BAA03536." evidence="8" ref="1">
    <original>V</original>
    <variation>M</variation>
    <location>
        <position position="33"/>
    </location>
</feature>
<feature type="sequence conflict" description="In Ref. 1; BAA03536." evidence="8" ref="1">
    <original>M</original>
    <variation>I</variation>
    <location>
        <position position="299"/>
    </location>
</feature>